<comment type="function">
    <text evidence="1">Scaffold protein for the de novo synthesis of iron-sulfur (Fe-S) clusters within mitochondria, which is required for maturation of both mitochondrial and cytoplasmic [2Fe-2S] and [4Fe-4S] proteins. First, a [2Fe-2S] cluster is transiently assembled on the scaffold protein ISU1. In a second step, the cluster is released from ISU1, transferred to a glutaredoxin, followed by the formation of mitochondrial [2Fe-2S] proteins, the synthesis of [4Fe-4S] clusters and their target-specific insertion into the recipient apoproteins. Cluster assembly on ISU1 depends on the function of the cysteine desulfurase complex NFS1-ISD11, which serves as the sulfur donor for cluster synthesis, the iron-binding protein frataxin as the putative iron donor, and the electron transfer chain comprised of ferredoxin reductase and ferredoxin, which receive their electrons from NADH.</text>
</comment>
<comment type="cofactor">
    <cofactor evidence="2">
        <name>[2Fe-2S] cluster</name>
        <dbReference type="ChEBI" id="CHEBI:190135"/>
    </cofactor>
    <text evidence="2">Binds 1 [2Fe-2S] cluster per subunit.</text>
</comment>
<comment type="pathway">
    <text evidence="1">Cofactor biosynthesis; iron-sulfur cluster biosynthesis.</text>
</comment>
<comment type="subunit">
    <text evidence="1">Component of the core Fe-S cluster (ISC) assembly machinery.</text>
</comment>
<comment type="subcellular location">
    <subcellularLocation>
        <location evidence="1">Mitochondrion matrix</location>
    </subcellularLocation>
</comment>
<comment type="similarity">
    <text evidence="4">Belongs to the NifU family.</text>
</comment>
<gene>
    <name type="primary">ISU1</name>
    <name type="ordered locus">ACR112C</name>
</gene>
<name>ISU1_EREGS</name>
<feature type="transit peptide" description="Mitochondrion" evidence="3">
    <location>
        <begin position="1"/>
        <end status="unknown"/>
    </location>
</feature>
<feature type="chain" id="PRO_0000019694" description="Iron sulfur cluster assembly protein 1, mitochondrial">
    <location>
        <begin status="unknown"/>
        <end position="154"/>
    </location>
</feature>
<accession>Q75C07</accession>
<organism>
    <name type="scientific">Eremothecium gossypii (strain ATCC 10895 / CBS 109.51 / FGSC 9923 / NRRL Y-1056)</name>
    <name type="common">Yeast</name>
    <name type="synonym">Ashbya gossypii</name>
    <dbReference type="NCBI Taxonomy" id="284811"/>
    <lineage>
        <taxon>Eukaryota</taxon>
        <taxon>Fungi</taxon>
        <taxon>Dikarya</taxon>
        <taxon>Ascomycota</taxon>
        <taxon>Saccharomycotina</taxon>
        <taxon>Saccharomycetes</taxon>
        <taxon>Saccharomycetales</taxon>
        <taxon>Saccharomycetaceae</taxon>
        <taxon>Eremothecium</taxon>
    </lineage>
</organism>
<sequence>MLGFRQTATAIVRPVGTIGYARRCYHPKVIDHYTNPRNVGTLDKKLTNVGTGLVGAPACGDVMRLQIQVDDSTGVIENVKFKTFGCGSAIASSSYMTELVRGKTLADAEKIKNTEIARELSLPPVKLHCSMLAEDAIKAAIKDYRSKRKATELR</sequence>
<dbReference type="EMBL" id="AE016816">
    <property type="protein sequence ID" value="AAS51338.1"/>
    <property type="molecule type" value="Genomic_DNA"/>
</dbReference>
<dbReference type="RefSeq" id="NP_983514.1">
    <property type="nucleotide sequence ID" value="NM_208867.1"/>
</dbReference>
<dbReference type="SMR" id="Q75C07"/>
<dbReference type="FunCoup" id="Q75C07">
    <property type="interactions" value="531"/>
</dbReference>
<dbReference type="STRING" id="284811.Q75C07"/>
<dbReference type="EnsemblFungi" id="AAS51338">
    <property type="protein sequence ID" value="AAS51338"/>
    <property type="gene ID" value="AGOS_ACR112C"/>
</dbReference>
<dbReference type="GeneID" id="4619645"/>
<dbReference type="KEGG" id="ago:AGOS_ACR112C"/>
<dbReference type="eggNOG" id="KOG3361">
    <property type="taxonomic scope" value="Eukaryota"/>
</dbReference>
<dbReference type="HOGENOM" id="CLU_079283_5_0_1"/>
<dbReference type="InParanoid" id="Q75C07"/>
<dbReference type="OMA" id="SMVTEMV"/>
<dbReference type="OrthoDB" id="1925777at2759"/>
<dbReference type="UniPathway" id="UPA00266"/>
<dbReference type="Proteomes" id="UP000000591">
    <property type="component" value="Chromosome III"/>
</dbReference>
<dbReference type="GO" id="GO:0005737">
    <property type="term" value="C:cytoplasm"/>
    <property type="evidence" value="ECO:0000318"/>
    <property type="project" value="GO_Central"/>
</dbReference>
<dbReference type="GO" id="GO:0005759">
    <property type="term" value="C:mitochondrial matrix"/>
    <property type="evidence" value="ECO:0000318"/>
    <property type="project" value="GO_Central"/>
</dbReference>
<dbReference type="GO" id="GO:0051537">
    <property type="term" value="F:2 iron, 2 sulfur cluster binding"/>
    <property type="evidence" value="ECO:0000318"/>
    <property type="project" value="GO_Central"/>
</dbReference>
<dbReference type="GO" id="GO:0008198">
    <property type="term" value="F:ferrous iron binding"/>
    <property type="evidence" value="ECO:0000318"/>
    <property type="project" value="GO_Central"/>
</dbReference>
<dbReference type="GO" id="GO:0006879">
    <property type="term" value="P:intracellular iron ion homeostasis"/>
    <property type="evidence" value="ECO:0000318"/>
    <property type="project" value="GO_Central"/>
</dbReference>
<dbReference type="GO" id="GO:0016226">
    <property type="term" value="P:iron-sulfur cluster assembly"/>
    <property type="evidence" value="ECO:0007669"/>
    <property type="project" value="InterPro"/>
</dbReference>
<dbReference type="CDD" id="cd06664">
    <property type="entry name" value="IscU_like"/>
    <property type="match status" value="1"/>
</dbReference>
<dbReference type="FunFam" id="3.90.1010.10:FF:000005">
    <property type="entry name" value="Iron-sulfur cluster assembly protein"/>
    <property type="match status" value="1"/>
</dbReference>
<dbReference type="Gene3D" id="3.90.1010.10">
    <property type="match status" value="1"/>
</dbReference>
<dbReference type="InterPro" id="IPR011339">
    <property type="entry name" value="ISCU"/>
</dbReference>
<dbReference type="InterPro" id="IPR002871">
    <property type="entry name" value="NIF_FeS_clus_asmbl_NifU_N"/>
</dbReference>
<dbReference type="NCBIfam" id="TIGR01999">
    <property type="entry name" value="iscU"/>
    <property type="match status" value="1"/>
</dbReference>
<dbReference type="PANTHER" id="PTHR10093">
    <property type="entry name" value="IRON-SULFUR CLUSTER ASSEMBLY ENZYME NIFU HOMOLOG"/>
    <property type="match status" value="1"/>
</dbReference>
<dbReference type="Pfam" id="PF01592">
    <property type="entry name" value="NifU_N"/>
    <property type="match status" value="1"/>
</dbReference>
<dbReference type="SUPFAM" id="SSF82649">
    <property type="entry name" value="SufE/NifU"/>
    <property type="match status" value="1"/>
</dbReference>
<protein>
    <recommendedName>
        <fullName>Iron sulfur cluster assembly protein 1, mitochondrial</fullName>
    </recommendedName>
    <alternativeName>
        <fullName>Iron sulfur cluster scaffold protein 1</fullName>
    </alternativeName>
</protein>
<evidence type="ECO:0000250" key="1">
    <source>
        <dbReference type="UniProtKB" id="Q03020"/>
    </source>
</evidence>
<evidence type="ECO:0000250" key="2">
    <source>
        <dbReference type="UniProtKB" id="Q9UTC6"/>
    </source>
</evidence>
<evidence type="ECO:0000255" key="3"/>
<evidence type="ECO:0000305" key="4"/>
<reference key="1">
    <citation type="journal article" date="2004" name="Science">
        <title>The Ashbya gossypii genome as a tool for mapping the ancient Saccharomyces cerevisiae genome.</title>
        <authorList>
            <person name="Dietrich F.S."/>
            <person name="Voegeli S."/>
            <person name="Brachat S."/>
            <person name="Lerch A."/>
            <person name="Gates K."/>
            <person name="Steiner S."/>
            <person name="Mohr C."/>
            <person name="Poehlmann R."/>
            <person name="Luedi P."/>
            <person name="Choi S."/>
            <person name="Wing R.A."/>
            <person name="Flavier A."/>
            <person name="Gaffney T.D."/>
            <person name="Philippsen P."/>
        </authorList>
    </citation>
    <scope>NUCLEOTIDE SEQUENCE [LARGE SCALE GENOMIC DNA]</scope>
    <source>
        <strain>ATCC 10895 / CBS 109.51 / FGSC 9923 / NRRL Y-1056</strain>
    </source>
</reference>
<reference key="2">
    <citation type="journal article" date="2013" name="G3 (Bethesda)">
        <title>Genomes of Ashbya fungi isolated from insects reveal four mating-type loci, numerous translocations, lack of transposons, and distinct gene duplications.</title>
        <authorList>
            <person name="Dietrich F.S."/>
            <person name="Voegeli S."/>
            <person name="Kuo S."/>
            <person name="Philippsen P."/>
        </authorList>
    </citation>
    <scope>GENOME REANNOTATION</scope>
    <source>
        <strain>ATCC 10895 / CBS 109.51 / FGSC 9923 / NRRL Y-1056</strain>
    </source>
</reference>
<proteinExistence type="inferred from homology"/>
<keyword id="KW-0001">2Fe-2S</keyword>
<keyword id="KW-0408">Iron</keyword>
<keyword id="KW-0411">Iron-sulfur</keyword>
<keyword id="KW-0479">Metal-binding</keyword>
<keyword id="KW-0496">Mitochondrion</keyword>
<keyword id="KW-1185">Reference proteome</keyword>
<keyword id="KW-0809">Transit peptide</keyword>